<reference key="1">
    <citation type="journal article" date="1989" name="Immunogenetics">
        <title>Nucleotide sequence of a chimpanzee DOB cDNA clone.</title>
        <authorList>
            <person name="Kasahara M."/>
            <person name="Klein D."/>
            <person name="Klein J."/>
        </authorList>
    </citation>
    <scope>NUCLEOTIDE SEQUENCE [MRNA]</scope>
</reference>
<name>DOB_PANTR</name>
<proteinExistence type="evidence at transcript level"/>
<organism>
    <name type="scientific">Pan troglodytes</name>
    <name type="common">Chimpanzee</name>
    <dbReference type="NCBI Taxonomy" id="9598"/>
    <lineage>
        <taxon>Eukaryota</taxon>
        <taxon>Metazoa</taxon>
        <taxon>Chordata</taxon>
        <taxon>Craniata</taxon>
        <taxon>Vertebrata</taxon>
        <taxon>Euteleostomi</taxon>
        <taxon>Mammalia</taxon>
        <taxon>Eutheria</taxon>
        <taxon>Euarchontoglires</taxon>
        <taxon>Primates</taxon>
        <taxon>Haplorrhini</taxon>
        <taxon>Catarrhini</taxon>
        <taxon>Hominidae</taxon>
        <taxon>Pan</taxon>
    </lineage>
</organism>
<protein>
    <recommendedName>
        <fullName>Patr class II histocompatibility antigen, DO beta chain</fullName>
    </recommendedName>
    <alternativeName>
        <fullName>ChLa class II histocompatibility antigen, DO beta chain</fullName>
    </alternativeName>
    <alternativeName>
        <fullName>MHC class II antigen DOB</fullName>
    </alternativeName>
</protein>
<sequence>MGSGWVPWVVALLVNLTRLDSSMTQGTDSPEDFVIQAKADCYFTNGTEKVQFVVRFIFNLEEYVRFDSDVGMFVALTKLGQPDAEQWNSRLDLLERSRQAVDGVCRHNYRLGAPFTVGRKVQPEVTVYPERTPLLHQHNLLHCSVTGFYPGDIKIRWFLNGQEERARVMSTGPIRNGDWTFQTVVMLEMTPELGHVYTCLVDHSSLLSPVSVEWRAQSEYSWKKMLSGIAAFLLGLIFLLVGIVIQLRAQKGYVRTQMSGNEVSRAVLLPQSC</sequence>
<dbReference type="EMBL" id="M24358">
    <property type="protein sequence ID" value="AAA35409.1"/>
    <property type="molecule type" value="mRNA"/>
</dbReference>
<dbReference type="PIR" id="A45879">
    <property type="entry name" value="A45879"/>
</dbReference>
<dbReference type="RefSeq" id="NP_001123943.1">
    <property type="nucleotide sequence ID" value="NM_001130471.1"/>
</dbReference>
<dbReference type="SMR" id="P18467"/>
<dbReference type="STRING" id="9598.ENSPTRP00000030772"/>
<dbReference type="GlyCosmos" id="P18467">
    <property type="glycosylation" value="1 site, No reported glycans"/>
</dbReference>
<dbReference type="PaxDb" id="9598-ENSPTRP00000030772"/>
<dbReference type="GeneID" id="471977"/>
<dbReference type="KEGG" id="ptr:471977"/>
<dbReference type="CTD" id="471977"/>
<dbReference type="eggNOG" id="ENOG502RWX2">
    <property type="taxonomic scope" value="Eukaryota"/>
</dbReference>
<dbReference type="InParanoid" id="P18467"/>
<dbReference type="Proteomes" id="UP000002277">
    <property type="component" value="Unplaced"/>
</dbReference>
<dbReference type="GO" id="GO:0031902">
    <property type="term" value="C:late endosome membrane"/>
    <property type="evidence" value="ECO:0000318"/>
    <property type="project" value="GO_Central"/>
</dbReference>
<dbReference type="GO" id="GO:0005765">
    <property type="term" value="C:lysosomal membrane"/>
    <property type="evidence" value="ECO:0000318"/>
    <property type="project" value="GO_Central"/>
</dbReference>
<dbReference type="GO" id="GO:0042613">
    <property type="term" value="C:MHC class II protein complex"/>
    <property type="evidence" value="ECO:0000318"/>
    <property type="project" value="GO_Central"/>
</dbReference>
<dbReference type="GO" id="GO:0023026">
    <property type="term" value="F:MHC class II protein complex binding"/>
    <property type="evidence" value="ECO:0000318"/>
    <property type="project" value="GO_Central"/>
</dbReference>
<dbReference type="GO" id="GO:0042605">
    <property type="term" value="F:peptide antigen binding"/>
    <property type="evidence" value="ECO:0000318"/>
    <property type="project" value="GO_Central"/>
</dbReference>
<dbReference type="GO" id="GO:0002250">
    <property type="term" value="P:adaptive immune response"/>
    <property type="evidence" value="ECO:0007669"/>
    <property type="project" value="UniProtKB-KW"/>
</dbReference>
<dbReference type="GO" id="GO:0019886">
    <property type="term" value="P:antigen processing and presentation of exogenous peptide antigen via MHC class II"/>
    <property type="evidence" value="ECO:0000318"/>
    <property type="project" value="GO_Central"/>
</dbReference>
<dbReference type="GO" id="GO:0002503">
    <property type="term" value="P:peptide antigen assembly with MHC class II protein complex"/>
    <property type="evidence" value="ECO:0000318"/>
    <property type="project" value="GO_Central"/>
</dbReference>
<dbReference type="GO" id="GO:0050778">
    <property type="term" value="P:positive regulation of immune response"/>
    <property type="evidence" value="ECO:0000318"/>
    <property type="project" value="GO_Central"/>
</dbReference>
<dbReference type="GO" id="GO:0050870">
    <property type="term" value="P:positive regulation of T cell activation"/>
    <property type="evidence" value="ECO:0000318"/>
    <property type="project" value="GO_Central"/>
</dbReference>
<dbReference type="FunFam" id="2.60.40.10:FF:000116">
    <property type="entry name" value="HLA class II histocompatibility antigen, DRB1-1 beta chain"/>
    <property type="match status" value="1"/>
</dbReference>
<dbReference type="FunFam" id="3.10.320.10:FF:000001">
    <property type="entry name" value="HLA class II histocompatibility antigen, DRB1-1 beta chain"/>
    <property type="match status" value="1"/>
</dbReference>
<dbReference type="Gene3D" id="3.10.320.10">
    <property type="entry name" value="Class II Histocompatibility Antigen, M Beta Chain, Chain B, domain 1"/>
    <property type="match status" value="1"/>
</dbReference>
<dbReference type="Gene3D" id="2.60.40.10">
    <property type="entry name" value="Immunoglobulins"/>
    <property type="match status" value="1"/>
</dbReference>
<dbReference type="InterPro" id="IPR007110">
    <property type="entry name" value="Ig-like_dom"/>
</dbReference>
<dbReference type="InterPro" id="IPR036179">
    <property type="entry name" value="Ig-like_dom_sf"/>
</dbReference>
<dbReference type="InterPro" id="IPR013783">
    <property type="entry name" value="Ig-like_fold"/>
</dbReference>
<dbReference type="InterPro" id="IPR003006">
    <property type="entry name" value="Ig/MHC_CS"/>
</dbReference>
<dbReference type="InterPro" id="IPR003597">
    <property type="entry name" value="Ig_C1-set"/>
</dbReference>
<dbReference type="InterPro" id="IPR050160">
    <property type="entry name" value="MHC/Immunoglobulin"/>
</dbReference>
<dbReference type="InterPro" id="IPR011162">
    <property type="entry name" value="MHC_I/II-like_Ag-recog"/>
</dbReference>
<dbReference type="InterPro" id="IPR014745">
    <property type="entry name" value="MHC_II_a/b_N"/>
</dbReference>
<dbReference type="InterPro" id="IPR000353">
    <property type="entry name" value="MHC_II_b_N"/>
</dbReference>
<dbReference type="PANTHER" id="PTHR19944:SF43">
    <property type="entry name" value="HLA CLASS II HISTOCOMPATIBILITY ANTIGEN, DO BETA CHAIN"/>
    <property type="match status" value="1"/>
</dbReference>
<dbReference type="PANTHER" id="PTHR19944">
    <property type="entry name" value="MHC CLASS II-RELATED"/>
    <property type="match status" value="1"/>
</dbReference>
<dbReference type="Pfam" id="PF07654">
    <property type="entry name" value="C1-set"/>
    <property type="match status" value="1"/>
</dbReference>
<dbReference type="Pfam" id="PF00969">
    <property type="entry name" value="MHC_II_beta"/>
    <property type="match status" value="1"/>
</dbReference>
<dbReference type="SMART" id="SM00407">
    <property type="entry name" value="IGc1"/>
    <property type="match status" value="1"/>
</dbReference>
<dbReference type="SMART" id="SM00921">
    <property type="entry name" value="MHC_II_beta"/>
    <property type="match status" value="1"/>
</dbReference>
<dbReference type="SUPFAM" id="SSF48726">
    <property type="entry name" value="Immunoglobulin"/>
    <property type="match status" value="1"/>
</dbReference>
<dbReference type="SUPFAM" id="SSF54452">
    <property type="entry name" value="MHC antigen-recognition domain"/>
    <property type="match status" value="1"/>
</dbReference>
<dbReference type="PROSITE" id="PS50835">
    <property type="entry name" value="IG_LIKE"/>
    <property type="match status" value="1"/>
</dbReference>
<dbReference type="PROSITE" id="PS00290">
    <property type="entry name" value="IG_MHC"/>
    <property type="match status" value="1"/>
</dbReference>
<gene>
    <name type="primary">Patr-DOB</name>
</gene>
<keyword id="KW-1064">Adaptive immunity</keyword>
<keyword id="KW-1015">Disulfide bond</keyword>
<keyword id="KW-0967">Endosome</keyword>
<keyword id="KW-0325">Glycoprotein</keyword>
<keyword id="KW-0391">Immunity</keyword>
<keyword id="KW-0458">Lysosome</keyword>
<keyword id="KW-0472">Membrane</keyword>
<keyword id="KW-0491">MHC II</keyword>
<keyword id="KW-1185">Reference proteome</keyword>
<keyword id="KW-0732">Signal</keyword>
<keyword id="KW-0812">Transmembrane</keyword>
<keyword id="KW-1133">Transmembrane helix</keyword>
<accession>P18467</accession>
<evidence type="ECO:0000250" key="1"/>
<evidence type="ECO:0000255" key="2"/>
<evidence type="ECO:0000255" key="3">
    <source>
        <dbReference type="PROSITE-ProRule" id="PRU00114"/>
    </source>
</evidence>
<evidence type="ECO:0000305" key="4"/>
<comment type="function">
    <text>Important modulator in the HLA class II restricted antigen presentation pathway by interaction with the HLA-DM molecule in B-cells. Modifies peptide exchange activity of HLA-DM.</text>
</comment>
<comment type="subunit">
    <text>Heterodimer of an alpha chain (DOA) and a beta chain (DOB). Forms a heterotetrameric complex with an HLA-DM molecule during intracellular transport in endosomal/lysosomal compartments in B-cells.</text>
</comment>
<comment type="subcellular location">
    <subcellularLocation>
        <location evidence="1">Endosome membrane</location>
        <topology evidence="1">Single-pass type I membrane protein</topology>
    </subcellularLocation>
    <subcellularLocation>
        <location evidence="1">Lysosome membrane</location>
        <topology evidence="1">Single-pass type I membrane protein</topology>
    </subcellularLocation>
    <text>Complexes with HLA-DM molecule during intracellular transport and in endosomal/lysosomal compartments. Heterotetramerization is necessary to exit the ER.</text>
</comment>
<comment type="similarity">
    <text evidence="4">Belongs to the MHC class II family.</text>
</comment>
<feature type="signal peptide">
    <location>
        <begin position="1"/>
        <end position="26"/>
    </location>
</feature>
<feature type="chain" id="PRO_0000018964" description="Patr class II histocompatibility antigen, DO beta chain">
    <location>
        <begin position="27"/>
        <end position="273"/>
    </location>
</feature>
<feature type="topological domain" description="Extracellular" evidence="2">
    <location>
        <begin position="27"/>
        <end position="224"/>
    </location>
</feature>
<feature type="transmembrane region" description="Helical" evidence="2">
    <location>
        <begin position="225"/>
        <end position="245"/>
    </location>
</feature>
<feature type="topological domain" description="Cytoplasmic" evidence="2">
    <location>
        <begin position="246"/>
        <end position="273"/>
    </location>
</feature>
<feature type="domain" description="Ig-like C1-type">
    <location>
        <begin position="123"/>
        <end position="213"/>
    </location>
</feature>
<feature type="region of interest" description="Beta-1">
    <location>
        <begin position="27"/>
        <end position="120"/>
    </location>
</feature>
<feature type="region of interest" description="Beta-2">
    <location>
        <begin position="121"/>
        <end position="214"/>
    </location>
</feature>
<feature type="region of interest" description="Connecting peptide">
    <location>
        <begin position="215"/>
        <end position="224"/>
    </location>
</feature>
<feature type="glycosylation site" description="N-linked (GlcNAc...) asparagine" evidence="2">
    <location>
        <position position="45"/>
    </location>
</feature>
<feature type="disulfide bond" evidence="3">
    <location>
        <begin position="41"/>
        <end position="105"/>
    </location>
</feature>
<feature type="disulfide bond" evidence="3">
    <location>
        <begin position="143"/>
        <end position="199"/>
    </location>
</feature>